<comment type="function">
    <text evidence="1">GTPase that plays an essential role in the late steps of ribosome biogenesis.</text>
</comment>
<comment type="subunit">
    <text evidence="1">Associates with the 50S ribosomal subunit.</text>
</comment>
<comment type="similarity">
    <text evidence="1">Belongs to the TRAFAC class TrmE-Era-EngA-EngB-Septin-like GTPase superfamily. EngA (Der) GTPase family.</text>
</comment>
<feature type="chain" id="PRO_1000011556" description="GTPase Der">
    <location>
        <begin position="1"/>
        <end position="442"/>
    </location>
</feature>
<feature type="domain" description="EngA-type G 1">
    <location>
        <begin position="3"/>
        <end position="167"/>
    </location>
</feature>
<feature type="domain" description="EngA-type G 2">
    <location>
        <begin position="177"/>
        <end position="350"/>
    </location>
</feature>
<feature type="domain" description="KH-like" evidence="1">
    <location>
        <begin position="351"/>
        <end position="435"/>
    </location>
</feature>
<feature type="binding site" evidence="1">
    <location>
        <begin position="9"/>
        <end position="16"/>
    </location>
    <ligand>
        <name>GTP</name>
        <dbReference type="ChEBI" id="CHEBI:37565"/>
        <label>1</label>
    </ligand>
</feature>
<feature type="binding site" evidence="1">
    <location>
        <begin position="56"/>
        <end position="60"/>
    </location>
    <ligand>
        <name>GTP</name>
        <dbReference type="ChEBI" id="CHEBI:37565"/>
        <label>1</label>
    </ligand>
</feature>
<feature type="binding site" evidence="1">
    <location>
        <begin position="119"/>
        <end position="122"/>
    </location>
    <ligand>
        <name>GTP</name>
        <dbReference type="ChEBI" id="CHEBI:37565"/>
        <label>1</label>
    </ligand>
</feature>
<feature type="binding site" evidence="1">
    <location>
        <begin position="183"/>
        <end position="190"/>
    </location>
    <ligand>
        <name>GTP</name>
        <dbReference type="ChEBI" id="CHEBI:37565"/>
        <label>2</label>
    </ligand>
</feature>
<feature type="binding site" evidence="1">
    <location>
        <begin position="230"/>
        <end position="234"/>
    </location>
    <ligand>
        <name>GTP</name>
        <dbReference type="ChEBI" id="CHEBI:37565"/>
        <label>2</label>
    </ligand>
</feature>
<feature type="binding site" evidence="1">
    <location>
        <begin position="295"/>
        <end position="298"/>
    </location>
    <ligand>
        <name>GTP</name>
        <dbReference type="ChEBI" id="CHEBI:37565"/>
        <label>2</label>
    </ligand>
</feature>
<protein>
    <recommendedName>
        <fullName evidence="1">GTPase Der</fullName>
    </recommendedName>
    <alternativeName>
        <fullName evidence="1">GTP-binding protein EngA</fullName>
    </alternativeName>
</protein>
<reference key="1">
    <citation type="journal article" date="2006" name="Nat. Biotechnol.">
        <title>Complete genome of the mutualistic, N2-fixing grass endophyte Azoarcus sp. strain BH72.</title>
        <authorList>
            <person name="Krause A."/>
            <person name="Ramakumar A."/>
            <person name="Bartels D."/>
            <person name="Battistoni F."/>
            <person name="Bekel T."/>
            <person name="Boch J."/>
            <person name="Boehm M."/>
            <person name="Friedrich F."/>
            <person name="Hurek T."/>
            <person name="Krause L."/>
            <person name="Linke B."/>
            <person name="McHardy A.C."/>
            <person name="Sarkar A."/>
            <person name="Schneiker S."/>
            <person name="Syed A.A."/>
            <person name="Thauer R."/>
            <person name="Vorhoelter F.-J."/>
            <person name="Weidner S."/>
            <person name="Puehler A."/>
            <person name="Reinhold-Hurek B."/>
            <person name="Kaiser O."/>
            <person name="Goesmann A."/>
        </authorList>
    </citation>
    <scope>NUCLEOTIDE SEQUENCE [LARGE SCALE GENOMIC DNA]</scope>
    <source>
        <strain>BH72</strain>
    </source>
</reference>
<gene>
    <name evidence="1" type="primary">der</name>
    <name type="synonym">engA</name>
    <name type="ordered locus">azo0931</name>
</gene>
<organism>
    <name type="scientific">Azoarcus sp. (strain BH72)</name>
    <dbReference type="NCBI Taxonomy" id="418699"/>
    <lineage>
        <taxon>Bacteria</taxon>
        <taxon>Pseudomonadati</taxon>
        <taxon>Pseudomonadota</taxon>
        <taxon>Betaproteobacteria</taxon>
        <taxon>Rhodocyclales</taxon>
        <taxon>Zoogloeaceae</taxon>
        <taxon>Azoarcus</taxon>
    </lineage>
</organism>
<sequence length="442" mass="47834">MKPTIVLVGRPNVGKSTLFNRLTKTRDALVADQPGLTRDRHYGVGRVGDRDYLVVDTAGFDPVAKDGIMHEMARQAEQAIAEADVLLFLVDGRAGRTPHDDQIAAHLRRAGRPVVVVVNKAEGLDRATVAADFHALGLGAPLAVSAAHGDGVKALVELVLAPFPADDEVEAAEDAGPRVAIVGRPNVGKSTLVNTLLGEERVIAFDMPGTTRDAIAIPFERGGKQYTLIDTAGLRRRGKVFEAVEKFSVIKTLQAIQEANVVVLVLDAAQDISDQDAHIAGFVLDTGRALVVAINKWDAVDDYRRARLKEDMARKLAFLSFARFHQISALRAEGIAALLKSVDGAYAAAMSNLSTPRLTRTMQAAVAKQAPPRHGSARPKLRYAHQGGMNPPVIVIHGNALDHIPNSYVRFLERTFMEAFKLQGTPLRIQFRTAHNPYATKA</sequence>
<name>DER_AZOSB</name>
<evidence type="ECO:0000255" key="1">
    <source>
        <dbReference type="HAMAP-Rule" id="MF_00195"/>
    </source>
</evidence>
<proteinExistence type="inferred from homology"/>
<accession>A1K3Z3</accession>
<keyword id="KW-0342">GTP-binding</keyword>
<keyword id="KW-0547">Nucleotide-binding</keyword>
<keyword id="KW-1185">Reference proteome</keyword>
<keyword id="KW-0677">Repeat</keyword>
<keyword id="KW-0690">Ribosome biogenesis</keyword>
<dbReference type="EMBL" id="AM406670">
    <property type="protein sequence ID" value="CAL93548.1"/>
    <property type="molecule type" value="Genomic_DNA"/>
</dbReference>
<dbReference type="RefSeq" id="WP_011764665.1">
    <property type="nucleotide sequence ID" value="NC_008702.1"/>
</dbReference>
<dbReference type="SMR" id="A1K3Z3"/>
<dbReference type="STRING" id="62928.azo0931"/>
<dbReference type="KEGG" id="aoa:dqs_1003"/>
<dbReference type="KEGG" id="azo:azo0931"/>
<dbReference type="eggNOG" id="COG1160">
    <property type="taxonomic scope" value="Bacteria"/>
</dbReference>
<dbReference type="HOGENOM" id="CLU_016077_6_2_4"/>
<dbReference type="OrthoDB" id="9805918at2"/>
<dbReference type="Proteomes" id="UP000002588">
    <property type="component" value="Chromosome"/>
</dbReference>
<dbReference type="GO" id="GO:0016887">
    <property type="term" value="F:ATP hydrolysis activity"/>
    <property type="evidence" value="ECO:0007669"/>
    <property type="project" value="InterPro"/>
</dbReference>
<dbReference type="GO" id="GO:0005525">
    <property type="term" value="F:GTP binding"/>
    <property type="evidence" value="ECO:0007669"/>
    <property type="project" value="UniProtKB-UniRule"/>
</dbReference>
<dbReference type="GO" id="GO:0043022">
    <property type="term" value="F:ribosome binding"/>
    <property type="evidence" value="ECO:0007669"/>
    <property type="project" value="TreeGrafter"/>
</dbReference>
<dbReference type="GO" id="GO:0042254">
    <property type="term" value="P:ribosome biogenesis"/>
    <property type="evidence" value="ECO:0007669"/>
    <property type="project" value="UniProtKB-KW"/>
</dbReference>
<dbReference type="CDD" id="cd01894">
    <property type="entry name" value="EngA1"/>
    <property type="match status" value="1"/>
</dbReference>
<dbReference type="CDD" id="cd01895">
    <property type="entry name" value="EngA2"/>
    <property type="match status" value="1"/>
</dbReference>
<dbReference type="FunFam" id="3.30.300.20:FF:000004">
    <property type="entry name" value="GTPase Der"/>
    <property type="match status" value="1"/>
</dbReference>
<dbReference type="FunFam" id="3.40.50.300:FF:000040">
    <property type="entry name" value="GTPase Der"/>
    <property type="match status" value="1"/>
</dbReference>
<dbReference type="FunFam" id="3.40.50.300:FF:000057">
    <property type="entry name" value="GTPase Der"/>
    <property type="match status" value="1"/>
</dbReference>
<dbReference type="Gene3D" id="3.30.300.20">
    <property type="match status" value="1"/>
</dbReference>
<dbReference type="Gene3D" id="3.40.50.300">
    <property type="entry name" value="P-loop containing nucleotide triphosphate hydrolases"/>
    <property type="match status" value="2"/>
</dbReference>
<dbReference type="HAMAP" id="MF_00195">
    <property type="entry name" value="GTPase_Der"/>
    <property type="match status" value="1"/>
</dbReference>
<dbReference type="InterPro" id="IPR003593">
    <property type="entry name" value="AAA+_ATPase"/>
</dbReference>
<dbReference type="InterPro" id="IPR031166">
    <property type="entry name" value="G_ENGA"/>
</dbReference>
<dbReference type="InterPro" id="IPR006073">
    <property type="entry name" value="GTP-bd"/>
</dbReference>
<dbReference type="InterPro" id="IPR016484">
    <property type="entry name" value="GTPase_Der"/>
</dbReference>
<dbReference type="InterPro" id="IPR032859">
    <property type="entry name" value="KH_dom-like"/>
</dbReference>
<dbReference type="InterPro" id="IPR015946">
    <property type="entry name" value="KH_dom-like_a/b"/>
</dbReference>
<dbReference type="InterPro" id="IPR027417">
    <property type="entry name" value="P-loop_NTPase"/>
</dbReference>
<dbReference type="InterPro" id="IPR005225">
    <property type="entry name" value="Small_GTP-bd"/>
</dbReference>
<dbReference type="NCBIfam" id="TIGR03594">
    <property type="entry name" value="GTPase_EngA"/>
    <property type="match status" value="1"/>
</dbReference>
<dbReference type="NCBIfam" id="TIGR00231">
    <property type="entry name" value="small_GTP"/>
    <property type="match status" value="2"/>
</dbReference>
<dbReference type="PANTHER" id="PTHR43834">
    <property type="entry name" value="GTPASE DER"/>
    <property type="match status" value="1"/>
</dbReference>
<dbReference type="PANTHER" id="PTHR43834:SF6">
    <property type="entry name" value="GTPASE DER"/>
    <property type="match status" value="1"/>
</dbReference>
<dbReference type="Pfam" id="PF14714">
    <property type="entry name" value="KH_dom-like"/>
    <property type="match status" value="1"/>
</dbReference>
<dbReference type="Pfam" id="PF01926">
    <property type="entry name" value="MMR_HSR1"/>
    <property type="match status" value="2"/>
</dbReference>
<dbReference type="PIRSF" id="PIRSF006485">
    <property type="entry name" value="GTP-binding_EngA"/>
    <property type="match status" value="1"/>
</dbReference>
<dbReference type="PRINTS" id="PR00326">
    <property type="entry name" value="GTP1OBG"/>
</dbReference>
<dbReference type="SMART" id="SM00382">
    <property type="entry name" value="AAA"/>
    <property type="match status" value="2"/>
</dbReference>
<dbReference type="SUPFAM" id="SSF52540">
    <property type="entry name" value="P-loop containing nucleoside triphosphate hydrolases"/>
    <property type="match status" value="2"/>
</dbReference>
<dbReference type="PROSITE" id="PS51712">
    <property type="entry name" value="G_ENGA"/>
    <property type="match status" value="2"/>
</dbReference>